<keyword id="KW-0025">Alternative splicing</keyword>
<keyword id="KW-0256">Endoplasmic reticulum</keyword>
<keyword id="KW-0472">Membrane</keyword>
<keyword id="KW-0479">Metal-binding</keyword>
<keyword id="KW-1267">Proteomics identification</keyword>
<keyword id="KW-1185">Reference proteome</keyword>
<keyword id="KW-0808">Transferase</keyword>
<keyword id="KW-0812">Transmembrane</keyword>
<keyword id="KW-1133">Transmembrane helix</keyword>
<keyword id="KW-0833">Ubl conjugation pathway</keyword>
<keyword id="KW-0862">Zinc</keyword>
<keyword id="KW-0863">Zinc-finger</keyword>
<sequence>MPLFLLSLPTPPSASGHERRQRPEAKTSGSEKKYLRAMQANRSQLHSPPGTGSSEDASTPQCVHTRLTGEGSCPHSGDVHIQINSIPKECAENASSRNIRSGVHSCAHGCVHSRLRGHSHSEARLTDDTAAESGDHGSSSFSEFRYLFKWLQKSLPYILILSVKLVMQHITGISLGIGLLTTFMYANKSIVNQVFLRERSSKIQCAWLLVFLAGSSVLLYYTFHSQSLYYSLIFLNPTLDHLSFWEVFWIVGITDFILKFFFMGLKCLILLVPSFIMPFKSKGYWYMLLEELCQYYRTFVPIPVWFRYLISYGEFGNVTRWSLGILLALLYLILKLLEFFGHLRTFRQVLRIFFTQPSYGVAASKRQCSDVDDICSICQAEFQKPILLICQHIFCEECMTLWFNREKTCPLCRTVISDHINKWKDGATSSHLQIY</sequence>
<proteinExistence type="evidence at protein level"/>
<reference key="1">
    <citation type="submission" date="1998-10" db="EMBL/GenBank/DDBJ databases">
        <title>Human PTD016 mRNA.</title>
        <authorList>
            <person name="Zhang Q."/>
            <person name="Guan Z."/>
            <person name="Dai M."/>
            <person name="Song H."/>
            <person name="Mao Y."/>
            <person name="Zhang Q."/>
            <person name="Mao M."/>
            <person name="Fu G."/>
            <person name="Luo M."/>
            <person name="Chen J."/>
            <person name="Hu R."/>
        </authorList>
    </citation>
    <scope>NUCLEOTIDE SEQUENCE [LARGE SCALE MRNA] (ISOFORM 2)</scope>
    <source>
        <tissue>Pituitary tumor</tissue>
    </source>
</reference>
<reference key="2">
    <citation type="journal article" date="2006" name="Nature">
        <title>DNA sequence of human chromosome 17 and analysis of rearrangement in the human lineage.</title>
        <authorList>
            <person name="Zody M.C."/>
            <person name="Garber M."/>
            <person name="Adams D.J."/>
            <person name="Sharpe T."/>
            <person name="Harrow J."/>
            <person name="Lupski J.R."/>
            <person name="Nicholson C."/>
            <person name="Searle S.M."/>
            <person name="Wilming L."/>
            <person name="Young S.K."/>
            <person name="Abouelleil A."/>
            <person name="Allen N.R."/>
            <person name="Bi W."/>
            <person name="Bloom T."/>
            <person name="Borowsky M.L."/>
            <person name="Bugalter B.E."/>
            <person name="Butler J."/>
            <person name="Chang J.L."/>
            <person name="Chen C.-K."/>
            <person name="Cook A."/>
            <person name="Corum B."/>
            <person name="Cuomo C.A."/>
            <person name="de Jong P.J."/>
            <person name="DeCaprio D."/>
            <person name="Dewar K."/>
            <person name="FitzGerald M."/>
            <person name="Gilbert J."/>
            <person name="Gibson R."/>
            <person name="Gnerre S."/>
            <person name="Goldstein S."/>
            <person name="Grafham D.V."/>
            <person name="Grocock R."/>
            <person name="Hafez N."/>
            <person name="Hagopian D.S."/>
            <person name="Hart E."/>
            <person name="Norman C.H."/>
            <person name="Humphray S."/>
            <person name="Jaffe D.B."/>
            <person name="Jones M."/>
            <person name="Kamal M."/>
            <person name="Khodiyar V.K."/>
            <person name="LaButti K."/>
            <person name="Laird G."/>
            <person name="Lehoczky J."/>
            <person name="Liu X."/>
            <person name="Lokyitsang T."/>
            <person name="Loveland J."/>
            <person name="Lui A."/>
            <person name="Macdonald P."/>
            <person name="Major J.E."/>
            <person name="Matthews L."/>
            <person name="Mauceli E."/>
            <person name="McCarroll S.A."/>
            <person name="Mihalev A.H."/>
            <person name="Mudge J."/>
            <person name="Nguyen C."/>
            <person name="Nicol R."/>
            <person name="O'Leary S.B."/>
            <person name="Osoegawa K."/>
            <person name="Schwartz D.C."/>
            <person name="Shaw-Smith C."/>
            <person name="Stankiewicz P."/>
            <person name="Steward C."/>
            <person name="Swarbreck D."/>
            <person name="Venkataraman V."/>
            <person name="Whittaker C.A."/>
            <person name="Yang X."/>
            <person name="Zimmer A.R."/>
            <person name="Bradley A."/>
            <person name="Hubbard T."/>
            <person name="Birren B.W."/>
            <person name="Rogers J."/>
            <person name="Lander E.S."/>
            <person name="Nusbaum C."/>
        </authorList>
    </citation>
    <scope>NUCLEOTIDE SEQUENCE [LARGE SCALE GENOMIC DNA]</scope>
</reference>
<reference key="3">
    <citation type="submission" date="2005-09" db="EMBL/GenBank/DDBJ databases">
        <authorList>
            <person name="Mural R.J."/>
            <person name="Istrail S."/>
            <person name="Sutton G.G."/>
            <person name="Florea L."/>
            <person name="Halpern A.L."/>
            <person name="Mobarry C.M."/>
            <person name="Lippert R."/>
            <person name="Walenz B."/>
            <person name="Shatkay H."/>
            <person name="Dew I."/>
            <person name="Miller J.R."/>
            <person name="Flanigan M.J."/>
            <person name="Edwards N.J."/>
            <person name="Bolanos R."/>
            <person name="Fasulo D."/>
            <person name="Halldorsson B.V."/>
            <person name="Hannenhalli S."/>
            <person name="Turner R."/>
            <person name="Yooseph S."/>
            <person name="Lu F."/>
            <person name="Nusskern D.R."/>
            <person name="Shue B.C."/>
            <person name="Zheng X.H."/>
            <person name="Zhong F."/>
            <person name="Delcher A.L."/>
            <person name="Huson D.H."/>
            <person name="Kravitz S.A."/>
            <person name="Mouchard L."/>
            <person name="Reinert K."/>
            <person name="Remington K.A."/>
            <person name="Clark A.G."/>
            <person name="Waterman M.S."/>
            <person name="Eichler E.E."/>
            <person name="Adams M.D."/>
            <person name="Hunkapiller M.W."/>
            <person name="Myers E.W."/>
            <person name="Venter J.C."/>
        </authorList>
    </citation>
    <scope>NUCLEOTIDE SEQUENCE [LARGE SCALE GENOMIC DNA]</scope>
</reference>
<reference key="4">
    <citation type="journal article" date="2004" name="Genome Res.">
        <title>The status, quality, and expansion of the NIH full-length cDNA project: the Mammalian Gene Collection (MGC).</title>
        <authorList>
            <consortium name="The MGC Project Team"/>
        </authorList>
    </citation>
    <scope>NUCLEOTIDE SEQUENCE [LARGE SCALE MRNA] (ISOFORMS 1 AND 3)</scope>
    <source>
        <tissue>Brain</tissue>
        <tissue>Testis</tissue>
    </source>
</reference>
<reference key="5">
    <citation type="journal article" date="2004" name="Nat. Genet.">
        <title>Complete sequencing and characterization of 21,243 full-length human cDNAs.</title>
        <authorList>
            <person name="Ota T."/>
            <person name="Suzuki Y."/>
            <person name="Nishikawa T."/>
            <person name="Otsuki T."/>
            <person name="Sugiyama T."/>
            <person name="Irie R."/>
            <person name="Wakamatsu A."/>
            <person name="Hayashi K."/>
            <person name="Sato H."/>
            <person name="Nagai K."/>
            <person name="Kimura K."/>
            <person name="Makita H."/>
            <person name="Sekine M."/>
            <person name="Obayashi M."/>
            <person name="Nishi T."/>
            <person name="Shibahara T."/>
            <person name="Tanaka T."/>
            <person name="Ishii S."/>
            <person name="Yamamoto J."/>
            <person name="Saito K."/>
            <person name="Kawai Y."/>
            <person name="Isono Y."/>
            <person name="Nakamura Y."/>
            <person name="Nagahari K."/>
            <person name="Murakami K."/>
            <person name="Yasuda T."/>
            <person name="Iwayanagi T."/>
            <person name="Wagatsuma M."/>
            <person name="Shiratori A."/>
            <person name="Sudo H."/>
            <person name="Hosoiri T."/>
            <person name="Kaku Y."/>
            <person name="Kodaira H."/>
            <person name="Kondo H."/>
            <person name="Sugawara M."/>
            <person name="Takahashi M."/>
            <person name="Kanda K."/>
            <person name="Yokoi T."/>
            <person name="Furuya T."/>
            <person name="Kikkawa E."/>
            <person name="Omura Y."/>
            <person name="Abe K."/>
            <person name="Kamihara K."/>
            <person name="Katsuta N."/>
            <person name="Sato K."/>
            <person name="Tanikawa M."/>
            <person name="Yamazaki M."/>
            <person name="Ninomiya K."/>
            <person name="Ishibashi T."/>
            <person name="Yamashita H."/>
            <person name="Murakawa K."/>
            <person name="Fujimori K."/>
            <person name="Tanai H."/>
            <person name="Kimata M."/>
            <person name="Watanabe M."/>
            <person name="Hiraoka S."/>
            <person name="Chiba Y."/>
            <person name="Ishida S."/>
            <person name="Ono Y."/>
            <person name="Takiguchi S."/>
            <person name="Watanabe S."/>
            <person name="Yosida M."/>
            <person name="Hotuta T."/>
            <person name="Kusano J."/>
            <person name="Kanehori K."/>
            <person name="Takahashi-Fujii A."/>
            <person name="Hara H."/>
            <person name="Tanase T.-O."/>
            <person name="Nomura Y."/>
            <person name="Togiya S."/>
            <person name="Komai F."/>
            <person name="Hara R."/>
            <person name="Takeuchi K."/>
            <person name="Arita M."/>
            <person name="Imose N."/>
            <person name="Musashino K."/>
            <person name="Yuuki H."/>
            <person name="Oshima A."/>
            <person name="Sasaki N."/>
            <person name="Aotsuka S."/>
            <person name="Yoshikawa Y."/>
            <person name="Matsunawa H."/>
            <person name="Ichihara T."/>
            <person name="Shiohata N."/>
            <person name="Sano S."/>
            <person name="Moriya S."/>
            <person name="Momiyama H."/>
            <person name="Satoh N."/>
            <person name="Takami S."/>
            <person name="Terashima Y."/>
            <person name="Suzuki O."/>
            <person name="Nakagawa S."/>
            <person name="Senoh A."/>
            <person name="Mizoguchi H."/>
            <person name="Goto Y."/>
            <person name="Shimizu F."/>
            <person name="Wakebe H."/>
            <person name="Hishigaki H."/>
            <person name="Watanabe T."/>
            <person name="Sugiyama A."/>
            <person name="Takemoto M."/>
            <person name="Kawakami B."/>
            <person name="Yamazaki M."/>
            <person name="Watanabe K."/>
            <person name="Kumagai A."/>
            <person name="Itakura S."/>
            <person name="Fukuzumi Y."/>
            <person name="Fujimori Y."/>
            <person name="Komiyama M."/>
            <person name="Tashiro H."/>
            <person name="Tanigami A."/>
            <person name="Fujiwara T."/>
            <person name="Ono T."/>
            <person name="Yamada K."/>
            <person name="Fujii Y."/>
            <person name="Ozaki K."/>
            <person name="Hirao M."/>
            <person name="Ohmori Y."/>
            <person name="Kawabata A."/>
            <person name="Hikiji T."/>
            <person name="Kobatake N."/>
            <person name="Inagaki H."/>
            <person name="Ikema Y."/>
            <person name="Okamoto S."/>
            <person name="Okitani R."/>
            <person name="Kawakami T."/>
            <person name="Noguchi S."/>
            <person name="Itoh T."/>
            <person name="Shigeta K."/>
            <person name="Senba T."/>
            <person name="Matsumura K."/>
            <person name="Nakajima Y."/>
            <person name="Mizuno T."/>
            <person name="Morinaga M."/>
            <person name="Sasaki M."/>
            <person name="Togashi T."/>
            <person name="Oyama M."/>
            <person name="Hata H."/>
            <person name="Watanabe M."/>
            <person name="Komatsu T."/>
            <person name="Mizushima-Sugano J."/>
            <person name="Satoh T."/>
            <person name="Shirai Y."/>
            <person name="Takahashi Y."/>
            <person name="Nakagawa K."/>
            <person name="Okumura K."/>
            <person name="Nagase T."/>
            <person name="Nomura N."/>
            <person name="Kikuchi H."/>
            <person name="Masuho Y."/>
            <person name="Yamashita R."/>
            <person name="Nakai K."/>
            <person name="Yada T."/>
            <person name="Nakamura Y."/>
            <person name="Ohara O."/>
            <person name="Isogai T."/>
            <person name="Sugano S."/>
        </authorList>
    </citation>
    <scope>NUCLEOTIDE SEQUENCE [LARGE SCALE MRNA] OF 177-435 (ISOFORM 1)</scope>
    <source>
        <tissue>Testis</tissue>
    </source>
</reference>
<reference key="6">
    <citation type="journal article" date="2006" name="Fertil. Steril.">
        <title>Identification of ten novel genes involved in human spermatogenesis by microarray analysis of testicular tissue.</title>
        <authorList>
            <person name="Lin Y.H."/>
            <person name="Lin Y.M."/>
            <person name="Teng Y.N."/>
            <person name="Hsieh T.Y."/>
            <person name="Lin Y.S."/>
            <person name="Kuo P.L."/>
        </authorList>
    </citation>
    <scope>TISSUE SPECIFICITY</scope>
</reference>
<reference key="7">
    <citation type="journal article" date="2016" name="Sci. Rep.">
        <title>Genome-wide identification and gene expression profiling of ubiquitin ligases for endoplasmic reticulum protein degradation.</title>
        <authorList>
            <person name="Kaneko M."/>
            <person name="Iwase I."/>
            <person name="Yamasaki Y."/>
            <person name="Takai T."/>
            <person name="Wu Y."/>
            <person name="Kanemoto S."/>
            <person name="Matsuhisa K."/>
            <person name="Asada R."/>
            <person name="Okuma Y."/>
            <person name="Watanabe T."/>
            <person name="Imaizumi K."/>
            <person name="Nomura Y."/>
        </authorList>
    </citation>
    <scope>FUNCTION</scope>
    <scope>CATALYTIC ACTIVITY</scope>
    <scope>SUBCELLULAR LOCATION</scope>
    <scope>TISSUE SPECIFICITY</scope>
    <scope>INDUCTION</scope>
    <scope>MUTAGENESIS OF CYS-375 AND CYS-378</scope>
</reference>
<organism>
    <name type="scientific">Homo sapiens</name>
    <name type="common">Human</name>
    <dbReference type="NCBI Taxonomy" id="9606"/>
    <lineage>
        <taxon>Eukaryota</taxon>
        <taxon>Metazoa</taxon>
        <taxon>Chordata</taxon>
        <taxon>Craniata</taxon>
        <taxon>Vertebrata</taxon>
        <taxon>Euteleostomi</taxon>
        <taxon>Mammalia</taxon>
        <taxon>Eutheria</taxon>
        <taxon>Euarchontoglires</taxon>
        <taxon>Primates</taxon>
        <taxon>Haplorrhini</taxon>
        <taxon>Catarrhini</taxon>
        <taxon>Hominidae</taxon>
        <taxon>Homo</taxon>
    </lineage>
</organism>
<feature type="chain" id="PRO_0000320635" description="E3 ubiquitin-protein ligase RNFT1">
    <location>
        <begin position="1"/>
        <end position="435"/>
    </location>
</feature>
<feature type="transmembrane region" description="Helical" evidence="1">
    <location>
        <begin position="158"/>
        <end position="178"/>
    </location>
</feature>
<feature type="transmembrane region" description="Helical" evidence="1">
    <location>
        <begin position="203"/>
        <end position="223"/>
    </location>
</feature>
<feature type="transmembrane region" description="Helical" evidence="1">
    <location>
        <begin position="233"/>
        <end position="253"/>
    </location>
</feature>
<feature type="transmembrane region" description="Helical" evidence="1">
    <location>
        <begin position="256"/>
        <end position="276"/>
    </location>
</feature>
<feature type="transmembrane region" description="Helical" evidence="1">
    <location>
        <begin position="298"/>
        <end position="318"/>
    </location>
</feature>
<feature type="transmembrane region" description="Helical" evidence="1">
    <location>
        <begin position="323"/>
        <end position="343"/>
    </location>
</feature>
<feature type="zinc finger region" description="RING-type" evidence="2">
    <location>
        <begin position="375"/>
        <end position="413"/>
    </location>
</feature>
<feature type="region of interest" description="Disordered" evidence="3">
    <location>
        <begin position="1"/>
        <end position="62"/>
    </location>
</feature>
<feature type="region of interest" description="Required for ubiquitin ligase activity and for protection against ER stress-induced cell death" evidence="5">
    <location>
        <begin position="368"/>
        <end position="419"/>
    </location>
</feature>
<feature type="compositionally biased region" description="Basic and acidic residues" evidence="3">
    <location>
        <begin position="16"/>
        <end position="34"/>
    </location>
</feature>
<feature type="compositionally biased region" description="Polar residues" evidence="3">
    <location>
        <begin position="40"/>
        <end position="62"/>
    </location>
</feature>
<feature type="splice variant" id="VSP_031700" description="In isoform 3." evidence="6">
    <original>ERSSKIQCAWLLVFLAGSSVLLYYTFHSQSLYYSLIFLNPTLDHLSFW</original>
    <variation>LNFFKSYFGPFELLGSILDCWNYRLHSEILFHGLKMPYFIGAFFHHAF</variation>
    <location>
        <begin position="198"/>
        <end position="245"/>
    </location>
</feature>
<feature type="splice variant" id="VSP_031698" description="In isoform 2." evidence="7">
    <original>ERSSKI</original>
    <variation>VSITSN</variation>
    <location>
        <begin position="198"/>
        <end position="203"/>
    </location>
</feature>
<feature type="splice variant" id="VSP_031699" description="In isoform 2." evidence="7">
    <location>
        <begin position="204"/>
        <end position="435"/>
    </location>
</feature>
<feature type="splice variant" id="VSP_031701" description="In isoform 3." evidence="6">
    <location>
        <begin position="246"/>
        <end position="435"/>
    </location>
</feature>
<feature type="mutagenesis site" description="Decreased ubiquitin ligase activity; when associated with S-378." evidence="5">
    <original>C</original>
    <variation>S</variation>
    <location>
        <position position="375"/>
    </location>
</feature>
<feature type="mutagenesis site" description="Decreased ubiquitin ligase activity; when associated with S-375." evidence="5">
    <original>C</original>
    <variation>S</variation>
    <location>
        <position position="378"/>
    </location>
</feature>
<feature type="sequence conflict" description="In Ref. 1; AAD43009." evidence="8" ref="1">
    <original>S</original>
    <variation>K</variation>
    <location sequence="Q5M7Z0-2">
        <position position="199"/>
    </location>
</feature>
<dbReference type="EC" id="2.3.2.27" evidence="5"/>
<dbReference type="EMBL" id="AF100745">
    <property type="protein sequence ID" value="AAD43009.1"/>
    <property type="status" value="ALT_FRAME"/>
    <property type="molecule type" value="mRNA"/>
</dbReference>
<dbReference type="EMBL" id="AC004686">
    <property type="status" value="NOT_ANNOTATED_CDS"/>
    <property type="molecule type" value="mRNA"/>
</dbReference>
<dbReference type="EMBL" id="AC005702">
    <property type="status" value="NOT_ANNOTATED_CDS"/>
    <property type="molecule type" value="mRNA"/>
</dbReference>
<dbReference type="EMBL" id="CH471109">
    <property type="protein sequence ID" value="EAW94381.1"/>
    <property type="molecule type" value="Genomic_DNA"/>
</dbReference>
<dbReference type="EMBL" id="BC006971">
    <property type="status" value="NOT_ANNOTATED_CDS"/>
    <property type="molecule type" value="mRNA"/>
</dbReference>
<dbReference type="EMBL" id="BC088365">
    <property type="protein sequence ID" value="AAH88365.2"/>
    <property type="molecule type" value="mRNA"/>
</dbReference>
<dbReference type="EMBL" id="AK098649">
    <property type="protein sequence ID" value="BAC05364.1"/>
    <property type="status" value="ALT_INIT"/>
    <property type="molecule type" value="mRNA"/>
</dbReference>
<dbReference type="CCDS" id="CCDS11622.2">
    <molecule id="Q5M7Z0-1"/>
</dbReference>
<dbReference type="RefSeq" id="NP_057209.3">
    <molecule id="Q5M7Z0-1"/>
    <property type="nucleotide sequence ID" value="NM_016125.3"/>
</dbReference>
<dbReference type="BioGRID" id="119323">
    <property type="interactions" value="36"/>
</dbReference>
<dbReference type="FunCoup" id="Q5M7Z0">
    <property type="interactions" value="1150"/>
</dbReference>
<dbReference type="IntAct" id="Q5M7Z0">
    <property type="interactions" value="12"/>
</dbReference>
<dbReference type="MINT" id="Q5M7Z0"/>
<dbReference type="STRING" id="9606.ENSP00000304670"/>
<dbReference type="iPTMnet" id="Q5M7Z0"/>
<dbReference type="PhosphoSitePlus" id="Q5M7Z0"/>
<dbReference type="BioMuta" id="RNFT1"/>
<dbReference type="DMDM" id="121947809"/>
<dbReference type="jPOST" id="Q5M7Z0"/>
<dbReference type="MassIVE" id="Q5M7Z0"/>
<dbReference type="PaxDb" id="9606-ENSP00000304670"/>
<dbReference type="PeptideAtlas" id="Q5M7Z0"/>
<dbReference type="ProteomicsDB" id="63564">
    <molecule id="Q5M7Z0-1"/>
</dbReference>
<dbReference type="ProteomicsDB" id="63565">
    <molecule id="Q5M7Z0-2"/>
</dbReference>
<dbReference type="ProteomicsDB" id="63566">
    <molecule id="Q5M7Z0-3"/>
</dbReference>
<dbReference type="Pumba" id="Q5M7Z0"/>
<dbReference type="Antibodypedia" id="2746">
    <property type="antibodies" value="81 antibodies from 14 providers"/>
</dbReference>
<dbReference type="DNASU" id="51136"/>
<dbReference type="Ensembl" id="ENST00000305783.13">
    <molecule id="Q5M7Z0-1"/>
    <property type="protein sequence ID" value="ENSP00000304670.8"/>
    <property type="gene ID" value="ENSG00000189050.16"/>
</dbReference>
<dbReference type="Ensembl" id="ENST00000482446.5">
    <molecule id="Q5M7Z0-3"/>
    <property type="protein sequence ID" value="ENSP00000436144.1"/>
    <property type="gene ID" value="ENSG00000189050.16"/>
</dbReference>
<dbReference type="GeneID" id="51136"/>
<dbReference type="KEGG" id="hsa:51136"/>
<dbReference type="MANE-Select" id="ENST00000305783.13">
    <property type="protein sequence ID" value="ENSP00000304670.8"/>
    <property type="RefSeq nucleotide sequence ID" value="NM_016125.4"/>
    <property type="RefSeq protein sequence ID" value="NP_057209.3"/>
</dbReference>
<dbReference type="UCSC" id="uc002iya.4">
    <molecule id="Q5M7Z0-1"/>
    <property type="organism name" value="human"/>
</dbReference>
<dbReference type="AGR" id="HGNC:30206"/>
<dbReference type="CTD" id="51136"/>
<dbReference type="GeneCards" id="RNFT1"/>
<dbReference type="HGNC" id="HGNC:30206">
    <property type="gene designation" value="RNFT1"/>
</dbReference>
<dbReference type="HPA" id="ENSG00000189050">
    <property type="expression patterns" value="Tissue enhanced (testis)"/>
</dbReference>
<dbReference type="MIM" id="615172">
    <property type="type" value="gene"/>
</dbReference>
<dbReference type="neXtProt" id="NX_Q5M7Z0"/>
<dbReference type="OpenTargets" id="ENSG00000189050"/>
<dbReference type="PharmGKB" id="PA162401921"/>
<dbReference type="VEuPathDB" id="HostDB:ENSG00000189050"/>
<dbReference type="eggNOG" id="KOG0802">
    <property type="taxonomic scope" value="Eukaryota"/>
</dbReference>
<dbReference type="eggNOG" id="KOG4638">
    <property type="taxonomic scope" value="Eukaryota"/>
</dbReference>
<dbReference type="GeneTree" id="ENSGT00940000156740"/>
<dbReference type="HOGENOM" id="CLU_039460_2_1_1"/>
<dbReference type="InParanoid" id="Q5M7Z0"/>
<dbReference type="OMA" id="GCIHSRL"/>
<dbReference type="OrthoDB" id="9049620at2759"/>
<dbReference type="PAN-GO" id="Q5M7Z0">
    <property type="GO annotations" value="3 GO annotations based on evolutionary models"/>
</dbReference>
<dbReference type="PhylomeDB" id="Q5M7Z0"/>
<dbReference type="TreeFam" id="TF331930"/>
<dbReference type="PathwayCommons" id="Q5M7Z0"/>
<dbReference type="SignaLink" id="Q5M7Z0"/>
<dbReference type="SIGNOR" id="Q5M7Z0"/>
<dbReference type="UniPathway" id="UPA00143"/>
<dbReference type="BioGRID-ORCS" id="51136">
    <property type="hits" value="9 hits in 1187 CRISPR screens"/>
</dbReference>
<dbReference type="ChiTaRS" id="RNFT1">
    <property type="organism name" value="human"/>
</dbReference>
<dbReference type="GenomeRNAi" id="51136"/>
<dbReference type="Pharos" id="Q5M7Z0">
    <property type="development level" value="Tdark"/>
</dbReference>
<dbReference type="PRO" id="PR:Q5M7Z0"/>
<dbReference type="Proteomes" id="UP000005640">
    <property type="component" value="Chromosome 17"/>
</dbReference>
<dbReference type="RNAct" id="Q5M7Z0">
    <property type="molecule type" value="protein"/>
</dbReference>
<dbReference type="Bgee" id="ENSG00000189050">
    <property type="expression patterns" value="Expressed in adult organism and 174 other cell types or tissues"/>
</dbReference>
<dbReference type="ExpressionAtlas" id="Q5M7Z0">
    <property type="expression patterns" value="baseline and differential"/>
</dbReference>
<dbReference type="GO" id="GO:0005783">
    <property type="term" value="C:endoplasmic reticulum"/>
    <property type="evidence" value="ECO:0000314"/>
    <property type="project" value="UniProtKB"/>
</dbReference>
<dbReference type="GO" id="GO:0005789">
    <property type="term" value="C:endoplasmic reticulum membrane"/>
    <property type="evidence" value="ECO:0007669"/>
    <property type="project" value="UniProtKB-SubCell"/>
</dbReference>
<dbReference type="GO" id="GO:0043130">
    <property type="term" value="F:ubiquitin binding"/>
    <property type="evidence" value="ECO:0000314"/>
    <property type="project" value="UniProtKB"/>
</dbReference>
<dbReference type="GO" id="GO:0061630">
    <property type="term" value="F:ubiquitin protein ligase activity"/>
    <property type="evidence" value="ECO:0000314"/>
    <property type="project" value="UniProtKB"/>
</dbReference>
<dbReference type="GO" id="GO:0008270">
    <property type="term" value="F:zinc ion binding"/>
    <property type="evidence" value="ECO:0007669"/>
    <property type="project" value="UniProtKB-KW"/>
</dbReference>
<dbReference type="GO" id="GO:1904294">
    <property type="term" value="P:positive regulation of ERAD pathway"/>
    <property type="evidence" value="ECO:0000315"/>
    <property type="project" value="UniProtKB"/>
</dbReference>
<dbReference type="GO" id="GO:0051865">
    <property type="term" value="P:protein autoubiquitination"/>
    <property type="evidence" value="ECO:0000314"/>
    <property type="project" value="UniProtKB"/>
</dbReference>
<dbReference type="CDD" id="cd16741">
    <property type="entry name" value="RING-HC_RNFT1"/>
    <property type="match status" value="1"/>
</dbReference>
<dbReference type="FunFam" id="3.30.40.10:FF:000440">
    <property type="entry name" value="RING finger and transmembrane domain-containing protein 1"/>
    <property type="match status" value="1"/>
</dbReference>
<dbReference type="Gene3D" id="3.30.40.10">
    <property type="entry name" value="Zinc/RING finger domain, C3HC4 (zinc finger)"/>
    <property type="match status" value="1"/>
</dbReference>
<dbReference type="InterPro" id="IPR044235">
    <property type="entry name" value="RNFT1/2"/>
</dbReference>
<dbReference type="InterPro" id="IPR001841">
    <property type="entry name" value="Znf_RING"/>
</dbReference>
<dbReference type="InterPro" id="IPR013083">
    <property type="entry name" value="Znf_RING/FYVE/PHD"/>
</dbReference>
<dbReference type="InterPro" id="IPR017907">
    <property type="entry name" value="Znf_RING_CS"/>
</dbReference>
<dbReference type="PANTHER" id="PTHR15860:SF1">
    <property type="entry name" value="E3 UBIQUITIN-PROTEIN LIGASE RNFT1"/>
    <property type="match status" value="1"/>
</dbReference>
<dbReference type="PANTHER" id="PTHR15860">
    <property type="entry name" value="UNCHARACTERIZED RING FINGER-CONTAINING PROTEIN"/>
    <property type="match status" value="1"/>
</dbReference>
<dbReference type="Pfam" id="PF13639">
    <property type="entry name" value="zf-RING_2"/>
    <property type="match status" value="1"/>
</dbReference>
<dbReference type="SMART" id="SM00184">
    <property type="entry name" value="RING"/>
    <property type="match status" value="1"/>
</dbReference>
<dbReference type="SUPFAM" id="SSF57850">
    <property type="entry name" value="RING/U-box"/>
    <property type="match status" value="1"/>
</dbReference>
<dbReference type="PROSITE" id="PS00518">
    <property type="entry name" value="ZF_RING_1"/>
    <property type="match status" value="1"/>
</dbReference>
<dbReference type="PROSITE" id="PS50089">
    <property type="entry name" value="ZF_RING_2"/>
    <property type="match status" value="1"/>
</dbReference>
<protein>
    <recommendedName>
        <fullName evidence="8">E3 ubiquitin-protein ligase RNFT1</fullName>
        <ecNumber evidence="5">2.3.2.27</ecNumber>
    </recommendedName>
    <alternativeName>
        <fullName>Protein PTD016</fullName>
    </alternativeName>
    <alternativeName>
        <fullName>RING finger and transmembrane domain-containing protein 1</fullName>
    </alternativeName>
</protein>
<name>RNFT1_HUMAN</name>
<accession>Q5M7Z0</accession>
<accession>Q8N7D0</accession>
<accession>Q96IZ9</accession>
<accession>Q9Y686</accession>
<evidence type="ECO:0000255" key="1"/>
<evidence type="ECO:0000255" key="2">
    <source>
        <dbReference type="PROSITE-ProRule" id="PRU00175"/>
    </source>
</evidence>
<evidence type="ECO:0000256" key="3">
    <source>
        <dbReference type="SAM" id="MobiDB-lite"/>
    </source>
</evidence>
<evidence type="ECO:0000269" key="4">
    <source>
    </source>
</evidence>
<evidence type="ECO:0000269" key="5">
    <source>
    </source>
</evidence>
<evidence type="ECO:0000303" key="6">
    <source>
    </source>
</evidence>
<evidence type="ECO:0000303" key="7">
    <source ref="1"/>
</evidence>
<evidence type="ECO:0000305" key="8"/>
<gene>
    <name type="primary">RNFT1</name>
    <name type="ORF">PTD016</name>
</gene>
<comment type="function">
    <text evidence="5">E3 ubiquitin-protein ligase that acts in the endoplasmic reticulum (ER)-associated degradation (ERAD) pathway, which targets misfolded proteins that accumulate in the endoplasmic reticulum (ER) for ubiquitination and subsequent proteasome-mediated degradation. Protects cells from ER stress-induced apoptosis.</text>
</comment>
<comment type="catalytic activity">
    <reaction evidence="5">
        <text>S-ubiquitinyl-[E2 ubiquitin-conjugating enzyme]-L-cysteine + [acceptor protein]-L-lysine = [E2 ubiquitin-conjugating enzyme]-L-cysteine + N(6)-ubiquitinyl-[acceptor protein]-L-lysine.</text>
        <dbReference type="EC" id="2.3.2.27"/>
    </reaction>
</comment>
<comment type="pathway">
    <text evidence="5">Protein modification; protein ubiquitination.</text>
</comment>
<comment type="subcellular location">
    <subcellularLocation>
        <location evidence="5">Endoplasmic reticulum membrane</location>
        <topology evidence="8">Multi-pass membrane protein</topology>
    </subcellularLocation>
</comment>
<comment type="alternative products">
    <event type="alternative splicing"/>
    <isoform>
        <id>Q5M7Z0-1</id>
        <name>1</name>
        <sequence type="displayed"/>
    </isoform>
    <isoform>
        <id>Q5M7Z0-2</id>
        <name>2</name>
        <sequence type="described" ref="VSP_031698 VSP_031699"/>
    </isoform>
    <isoform>
        <id>Q5M7Z0-3</id>
        <name>3</name>
        <sequence type="described" ref="VSP_031700 VSP_031701"/>
    </isoform>
</comment>
<comment type="tissue specificity">
    <text evidence="4 5">Expressed at highest levels in testis, lower levels in heart, liver, lung, and kidney (PubMed:17074343). Not detected in brain, ovary, and uterus (PubMed:17074343). Down-regulated in testis from patients with maturation arrest (MA) or Sertoli cell-only syndrome (SCOS) (PubMed:17074343). Ubiquitously expressed with high expression in testis (PubMed:27485036).</text>
</comment>
<comment type="induction">
    <text evidence="5">Up-regulated by endoplasmic reticulum (ER) stress triggered by thapsigargin or tunicamycin.</text>
</comment>
<comment type="miscellaneous">
    <molecule>Isoform 3</molecule>
    <text evidence="8">May be produced at very low levels due to a premature stop codon in the mRNA, leading to nonsense-mediated mRNA decay.</text>
</comment>
<comment type="sequence caution" evidence="8">
    <conflict type="frameshift">
        <sequence resource="EMBL-CDS" id="AAD43009"/>
    </conflict>
</comment>
<comment type="sequence caution" evidence="8">
    <conflict type="erroneous initiation">
        <sequence resource="EMBL-CDS" id="BAC05364"/>
    </conflict>
</comment>
<comment type="sequence caution" evidence="8">
    <molecule>Isoform 2</molecule>
    <conflict type="frameshift">
        <sequence resource="EMBL-CDS" id="AAD43009"/>
    </conflict>
</comment>